<keyword id="KW-1185">Reference proteome</keyword>
<evidence type="ECO:0000255" key="1">
    <source>
        <dbReference type="HAMAP-Rule" id="MF_01221"/>
    </source>
</evidence>
<accession>A5D3N0</accession>
<name>Y987_PELTS</name>
<protein>
    <recommendedName>
        <fullName evidence="1">UPF0210 protein PTH_0987</fullName>
    </recommendedName>
</protein>
<comment type="subunit">
    <text evidence="1">Homodimer.</text>
</comment>
<comment type="similarity">
    <text evidence="1">Belongs to the UPF0210 family.</text>
</comment>
<organism>
    <name type="scientific">Pelotomaculum thermopropionicum (strain DSM 13744 / JCM 10971 / SI)</name>
    <dbReference type="NCBI Taxonomy" id="370438"/>
    <lineage>
        <taxon>Bacteria</taxon>
        <taxon>Bacillati</taxon>
        <taxon>Bacillota</taxon>
        <taxon>Clostridia</taxon>
        <taxon>Eubacteriales</taxon>
        <taxon>Desulfotomaculaceae</taxon>
        <taxon>Pelotomaculum</taxon>
    </lineage>
</organism>
<proteinExistence type="inferred from homology"/>
<reference key="1">
    <citation type="journal article" date="2008" name="Genome Res.">
        <title>The genome of Pelotomaculum thermopropionicum reveals niche-associated evolution in anaerobic microbiota.</title>
        <authorList>
            <person name="Kosaka T."/>
            <person name="Kato S."/>
            <person name="Shimoyama T."/>
            <person name="Ishii S."/>
            <person name="Abe T."/>
            <person name="Watanabe K."/>
        </authorList>
    </citation>
    <scope>NUCLEOTIDE SEQUENCE [LARGE SCALE GENOMIC DNA]</scope>
    <source>
        <strain>DSM 13744 / JCM 10971 / SI</strain>
    </source>
</reference>
<dbReference type="EMBL" id="AP009389">
    <property type="protein sequence ID" value="BAF59168.1"/>
    <property type="molecule type" value="Genomic_DNA"/>
</dbReference>
<dbReference type="SMR" id="A5D3N0"/>
<dbReference type="STRING" id="370438.PTH_0987"/>
<dbReference type="KEGG" id="pth:PTH_0987"/>
<dbReference type="eggNOG" id="COG2848">
    <property type="taxonomic scope" value="Bacteria"/>
</dbReference>
<dbReference type="HOGENOM" id="CLU_048704_0_0_9"/>
<dbReference type="Proteomes" id="UP000006556">
    <property type="component" value="Chromosome"/>
</dbReference>
<dbReference type="CDD" id="cd08025">
    <property type="entry name" value="RNR_PFL_like_DUF711"/>
    <property type="match status" value="1"/>
</dbReference>
<dbReference type="Gene3D" id="3.20.70.20">
    <property type="match status" value="1"/>
</dbReference>
<dbReference type="HAMAP" id="MF_01221">
    <property type="entry name" value="UPF0210"/>
    <property type="match status" value="1"/>
</dbReference>
<dbReference type="InterPro" id="IPR007841">
    <property type="entry name" value="UPF0210"/>
</dbReference>
<dbReference type="NCBIfam" id="NF003700">
    <property type="entry name" value="PRK05313.1"/>
    <property type="match status" value="1"/>
</dbReference>
<dbReference type="PANTHER" id="PTHR37560:SF1">
    <property type="entry name" value="UPF0210 PROTEIN MJ1665"/>
    <property type="match status" value="1"/>
</dbReference>
<dbReference type="PANTHER" id="PTHR37560">
    <property type="entry name" value="UPF0210 PROTEIN SPR0218"/>
    <property type="match status" value="1"/>
</dbReference>
<dbReference type="Pfam" id="PF05167">
    <property type="entry name" value="DUF711"/>
    <property type="match status" value="1"/>
</dbReference>
<dbReference type="SUPFAM" id="SSF51998">
    <property type="entry name" value="PFL-like glycyl radical enzymes"/>
    <property type="match status" value="1"/>
</dbReference>
<sequence>MLTLQEVVETIKMVQEENLDIRTITMGISLRDCADPNPRAARQKIYDKITRLAGNLVKTGEEIEREYGLPIVNKRISVTPIAIVAESCNTGNFADFARTLDEAAAAVGVNFIGGFSALVHKGFTAADHRLIDSIPEALATTERVCSSVNVATTKAGINMDAVYRMGHIIKKTAELTADRDSIGCAKLVVFANVPEDNPFMAGAFHGVGEPECVINVGVSGPGVVKNAVRTAKGADFGVLAETVKKTAFKITRMGELVGRTAARKLGVPFGIVDISLAPTPAVGDSVAEILECMGLERCGTHGTTAALALLNDAVKKGGAMASSYVGGLSGAFIPVSEDAGMIRAAEAGSLTLDKLEALTCVCSVGLDMIAVPGDTPPETIAAIIADEAAIGIINKKTTAVRLIPAAGKKAGDYVEFGGLLGRAPVMPVKPFSAGEFVRRGGRIPAPINSLTN</sequence>
<gene>
    <name type="ordered locus">PTH_0987</name>
</gene>
<feature type="chain" id="PRO_1000085665" description="UPF0210 protein PTH_0987">
    <location>
        <begin position="1"/>
        <end position="452"/>
    </location>
</feature>